<sequence length="160" mass="18477">MHCPFCRHADTQVVDSRVSEDGATIRRRRRCPACDKRFTTYERVELALPSVVKKDGSRTEFDRRKIVASMQLALRKRPVAADAIDAAVARIEYLLLGSGEREVRSERLGELVMNELRALDTIAYVRFASVYRRFEDVSEFEDVIEEFRRASSPPKPSRKR</sequence>
<organism>
    <name type="scientific">Paraburkholderia phytofirmans (strain DSM 17436 / LMG 22146 / PsJN)</name>
    <name type="common">Burkholderia phytofirmans</name>
    <dbReference type="NCBI Taxonomy" id="398527"/>
    <lineage>
        <taxon>Bacteria</taxon>
        <taxon>Pseudomonadati</taxon>
        <taxon>Pseudomonadota</taxon>
        <taxon>Betaproteobacteria</taxon>
        <taxon>Burkholderiales</taxon>
        <taxon>Burkholderiaceae</taxon>
        <taxon>Paraburkholderia</taxon>
    </lineage>
</organism>
<keyword id="KW-0067">ATP-binding</keyword>
<keyword id="KW-0238">DNA-binding</keyword>
<keyword id="KW-0479">Metal-binding</keyword>
<keyword id="KW-0547">Nucleotide-binding</keyword>
<keyword id="KW-0678">Repressor</keyword>
<keyword id="KW-0804">Transcription</keyword>
<keyword id="KW-0805">Transcription regulation</keyword>
<keyword id="KW-0862">Zinc</keyword>
<keyword id="KW-0863">Zinc-finger</keyword>
<comment type="function">
    <text evidence="1">Negatively regulates transcription of bacterial ribonucleotide reductase nrd genes and operons by binding to NrdR-boxes.</text>
</comment>
<comment type="cofactor">
    <cofactor evidence="1">
        <name>Zn(2+)</name>
        <dbReference type="ChEBI" id="CHEBI:29105"/>
    </cofactor>
    <text evidence="1">Binds 1 zinc ion.</text>
</comment>
<comment type="similarity">
    <text evidence="1">Belongs to the NrdR family.</text>
</comment>
<feature type="chain" id="PRO_1000124478" description="Transcriptional repressor NrdR">
    <location>
        <begin position="1"/>
        <end position="160"/>
    </location>
</feature>
<feature type="domain" description="ATP-cone" evidence="1">
    <location>
        <begin position="49"/>
        <end position="139"/>
    </location>
</feature>
<feature type="zinc finger region" evidence="1">
    <location>
        <begin position="3"/>
        <end position="34"/>
    </location>
</feature>
<reference key="1">
    <citation type="journal article" date="2011" name="J. Bacteriol.">
        <title>Complete genome sequence of the plant growth-promoting endophyte Burkholderia phytofirmans strain PsJN.</title>
        <authorList>
            <person name="Weilharter A."/>
            <person name="Mitter B."/>
            <person name="Shin M.V."/>
            <person name="Chain P.S."/>
            <person name="Nowak J."/>
            <person name="Sessitsch A."/>
        </authorList>
    </citation>
    <scope>NUCLEOTIDE SEQUENCE [LARGE SCALE GENOMIC DNA]</scope>
    <source>
        <strain>DSM 17436 / LMG 22146 / PsJN</strain>
    </source>
</reference>
<dbReference type="EMBL" id="CP001052">
    <property type="protein sequence ID" value="ACD15189.1"/>
    <property type="molecule type" value="Genomic_DNA"/>
</dbReference>
<dbReference type="RefSeq" id="WP_012431825.1">
    <property type="nucleotide sequence ID" value="NC_010681.1"/>
</dbReference>
<dbReference type="SMR" id="B2T084"/>
<dbReference type="STRING" id="398527.Bphyt_0766"/>
<dbReference type="GeneID" id="97305672"/>
<dbReference type="KEGG" id="bpy:Bphyt_0766"/>
<dbReference type="eggNOG" id="COG1327">
    <property type="taxonomic scope" value="Bacteria"/>
</dbReference>
<dbReference type="HOGENOM" id="CLU_108412_0_0_4"/>
<dbReference type="OrthoDB" id="9807461at2"/>
<dbReference type="Proteomes" id="UP000001739">
    <property type="component" value="Chromosome 1"/>
</dbReference>
<dbReference type="GO" id="GO:0005524">
    <property type="term" value="F:ATP binding"/>
    <property type="evidence" value="ECO:0007669"/>
    <property type="project" value="UniProtKB-KW"/>
</dbReference>
<dbReference type="GO" id="GO:0003677">
    <property type="term" value="F:DNA binding"/>
    <property type="evidence" value="ECO:0007669"/>
    <property type="project" value="UniProtKB-KW"/>
</dbReference>
<dbReference type="GO" id="GO:0008270">
    <property type="term" value="F:zinc ion binding"/>
    <property type="evidence" value="ECO:0007669"/>
    <property type="project" value="UniProtKB-UniRule"/>
</dbReference>
<dbReference type="GO" id="GO:0045892">
    <property type="term" value="P:negative regulation of DNA-templated transcription"/>
    <property type="evidence" value="ECO:0007669"/>
    <property type="project" value="UniProtKB-UniRule"/>
</dbReference>
<dbReference type="HAMAP" id="MF_00440">
    <property type="entry name" value="NrdR"/>
    <property type="match status" value="1"/>
</dbReference>
<dbReference type="InterPro" id="IPR005144">
    <property type="entry name" value="ATP-cone_dom"/>
</dbReference>
<dbReference type="InterPro" id="IPR055173">
    <property type="entry name" value="NrdR-like_N"/>
</dbReference>
<dbReference type="InterPro" id="IPR003796">
    <property type="entry name" value="RNR_NrdR-like"/>
</dbReference>
<dbReference type="NCBIfam" id="TIGR00244">
    <property type="entry name" value="transcriptional regulator NrdR"/>
    <property type="match status" value="1"/>
</dbReference>
<dbReference type="PANTHER" id="PTHR30455">
    <property type="entry name" value="TRANSCRIPTIONAL REPRESSOR NRDR"/>
    <property type="match status" value="1"/>
</dbReference>
<dbReference type="PANTHER" id="PTHR30455:SF2">
    <property type="entry name" value="TRANSCRIPTIONAL REPRESSOR NRDR"/>
    <property type="match status" value="1"/>
</dbReference>
<dbReference type="Pfam" id="PF03477">
    <property type="entry name" value="ATP-cone"/>
    <property type="match status" value="1"/>
</dbReference>
<dbReference type="Pfam" id="PF22811">
    <property type="entry name" value="Zn_ribbon_NrdR"/>
    <property type="match status" value="1"/>
</dbReference>
<dbReference type="PROSITE" id="PS51161">
    <property type="entry name" value="ATP_CONE"/>
    <property type="match status" value="1"/>
</dbReference>
<proteinExistence type="inferred from homology"/>
<accession>B2T084</accession>
<gene>
    <name evidence="1" type="primary">nrdR</name>
    <name type="ordered locus">Bphyt_0766</name>
</gene>
<name>NRDR_PARPJ</name>
<protein>
    <recommendedName>
        <fullName evidence="1">Transcriptional repressor NrdR</fullName>
    </recommendedName>
</protein>
<evidence type="ECO:0000255" key="1">
    <source>
        <dbReference type="HAMAP-Rule" id="MF_00440"/>
    </source>
</evidence>